<protein>
    <recommendedName>
        <fullName>Membrane-spanning 4-domains subfamily A member 10</fullName>
    </recommendedName>
    <alternativeName>
        <fullName>CD20 antigen-like 7</fullName>
    </alternativeName>
</protein>
<keyword id="KW-0472">Membrane</keyword>
<keyword id="KW-1267">Proteomics identification</keyword>
<keyword id="KW-0675">Receptor</keyword>
<keyword id="KW-1185">Reference proteome</keyword>
<keyword id="KW-0812">Transmembrane</keyword>
<keyword id="KW-1133">Transmembrane helix</keyword>
<organism>
    <name type="scientific">Homo sapiens</name>
    <name type="common">Human</name>
    <dbReference type="NCBI Taxonomy" id="9606"/>
    <lineage>
        <taxon>Eukaryota</taxon>
        <taxon>Metazoa</taxon>
        <taxon>Chordata</taxon>
        <taxon>Craniata</taxon>
        <taxon>Vertebrata</taxon>
        <taxon>Euteleostomi</taxon>
        <taxon>Mammalia</taxon>
        <taxon>Eutheria</taxon>
        <taxon>Euarchontoglires</taxon>
        <taxon>Primates</taxon>
        <taxon>Haplorrhini</taxon>
        <taxon>Catarrhini</taxon>
        <taxon>Hominidae</taxon>
        <taxon>Homo</taxon>
    </lineage>
</organism>
<comment type="function">
    <text>May be involved in signal transduction as a component of a multimeric receptor complex.</text>
</comment>
<comment type="interaction">
    <interactant intactId="EBI-30833901">
        <id>Q96PG2</id>
    </interactant>
    <interactant intactId="EBI-726944">
        <id>P46934</id>
        <label>NEDD4</label>
    </interactant>
    <organismsDiffer>false</organismsDiffer>
    <experiments>2</experiments>
</comment>
<comment type="subcellular location">
    <subcellularLocation>
        <location evidence="1">Membrane</location>
        <topology evidence="1">Multi-pass membrane protein</topology>
    </subcellularLocation>
</comment>
<comment type="similarity">
    <text evidence="3">Belongs to the MS4A family.</text>
</comment>
<evidence type="ECO:0000250" key="1"/>
<evidence type="ECO:0000255" key="2"/>
<evidence type="ECO:0000305" key="3"/>
<dbReference type="EMBL" id="AK122633">
    <property type="protein sequence ID" value="BAC85498.1"/>
    <property type="molecule type" value="mRNA"/>
</dbReference>
<dbReference type="EMBL" id="AP004243">
    <property type="status" value="NOT_ANNOTATED_CDS"/>
    <property type="molecule type" value="Genomic_DNA"/>
</dbReference>
<dbReference type="EMBL" id="BC137259">
    <property type="protein sequence ID" value="AAI37260.1"/>
    <property type="molecule type" value="mRNA"/>
</dbReference>
<dbReference type="EMBL" id="BC137263">
    <property type="protein sequence ID" value="AAI37264.1"/>
    <property type="molecule type" value="mRNA"/>
</dbReference>
<dbReference type="EMBL" id="AF354934">
    <property type="protein sequence ID" value="AAL07361.1"/>
    <property type="molecule type" value="Genomic_DNA"/>
</dbReference>
<dbReference type="EMBL" id="AF354935">
    <property type="protein sequence ID" value="AAL07362.1"/>
    <property type="molecule type" value="Genomic_DNA"/>
</dbReference>
<dbReference type="CCDS" id="CCDS7992.1"/>
<dbReference type="RefSeq" id="NP_996776.2">
    <property type="nucleotide sequence ID" value="NM_206893.4"/>
</dbReference>
<dbReference type="SMR" id="Q96PG2"/>
<dbReference type="BioGRID" id="131117">
    <property type="interactions" value="9"/>
</dbReference>
<dbReference type="FunCoup" id="Q96PG2">
    <property type="interactions" value="35"/>
</dbReference>
<dbReference type="IntAct" id="Q96PG2">
    <property type="interactions" value="7"/>
</dbReference>
<dbReference type="STRING" id="9606.ENSP00000311862"/>
<dbReference type="TCDB" id="1.A.37.2.1">
    <property type="family name" value="the cd20 ca(2+) channel (cd20) family"/>
</dbReference>
<dbReference type="iPTMnet" id="Q96PG2"/>
<dbReference type="PhosphoSitePlus" id="Q96PG2"/>
<dbReference type="BioMuta" id="MS4A10"/>
<dbReference type="DMDM" id="296439309"/>
<dbReference type="jPOST" id="Q96PG2"/>
<dbReference type="MassIVE" id="Q96PG2"/>
<dbReference type="PaxDb" id="9606-ENSP00000311862"/>
<dbReference type="PeptideAtlas" id="Q96PG2"/>
<dbReference type="ProteomicsDB" id="77691"/>
<dbReference type="TopDownProteomics" id="Q96PG2"/>
<dbReference type="Antibodypedia" id="70877">
    <property type="antibodies" value="5 antibodies from 5 providers"/>
</dbReference>
<dbReference type="DNASU" id="341116"/>
<dbReference type="Ensembl" id="ENST00000308287.2">
    <property type="protein sequence ID" value="ENSP00000311862.1"/>
    <property type="gene ID" value="ENSG00000172689.2"/>
</dbReference>
<dbReference type="GeneID" id="341116"/>
<dbReference type="KEGG" id="hsa:341116"/>
<dbReference type="MANE-Select" id="ENST00000308287.2">
    <property type="protein sequence ID" value="ENSP00000311862.1"/>
    <property type="RefSeq nucleotide sequence ID" value="NM_206893.4"/>
    <property type="RefSeq protein sequence ID" value="NP_996776.2"/>
</dbReference>
<dbReference type="UCSC" id="uc001npz.1">
    <property type="organism name" value="human"/>
</dbReference>
<dbReference type="AGR" id="HGNC:13368"/>
<dbReference type="CTD" id="341116"/>
<dbReference type="GeneCards" id="MS4A10"/>
<dbReference type="HGNC" id="HGNC:13368">
    <property type="gene designation" value="MS4A10"/>
</dbReference>
<dbReference type="HPA" id="ENSG00000172689">
    <property type="expression patterns" value="Tissue enriched (intestine)"/>
</dbReference>
<dbReference type="MIM" id="608403">
    <property type="type" value="gene"/>
</dbReference>
<dbReference type="neXtProt" id="NX_Q96PG2"/>
<dbReference type="OpenTargets" id="ENSG00000172689"/>
<dbReference type="PharmGKB" id="PA31110"/>
<dbReference type="VEuPathDB" id="HostDB:ENSG00000172689"/>
<dbReference type="eggNOG" id="ENOG502SH2M">
    <property type="taxonomic scope" value="Eukaryota"/>
</dbReference>
<dbReference type="GeneTree" id="ENSGT00390000010921"/>
<dbReference type="HOGENOM" id="CLU_1041911_0_0_1"/>
<dbReference type="InParanoid" id="Q96PG2"/>
<dbReference type="OMA" id="AWRGDCP"/>
<dbReference type="OrthoDB" id="9449631at2759"/>
<dbReference type="PAN-GO" id="Q96PG2">
    <property type="GO annotations" value="2 GO annotations based on evolutionary models"/>
</dbReference>
<dbReference type="PhylomeDB" id="Q96PG2"/>
<dbReference type="TreeFam" id="TF339722"/>
<dbReference type="PathwayCommons" id="Q96PG2"/>
<dbReference type="BioGRID-ORCS" id="341116">
    <property type="hits" value="11 hits in 1136 CRISPR screens"/>
</dbReference>
<dbReference type="GenomeRNAi" id="341116"/>
<dbReference type="Pharos" id="Q96PG2">
    <property type="development level" value="Tdark"/>
</dbReference>
<dbReference type="PRO" id="PR:Q96PG2"/>
<dbReference type="Proteomes" id="UP000005640">
    <property type="component" value="Chromosome 11"/>
</dbReference>
<dbReference type="RNAct" id="Q96PG2">
    <property type="molecule type" value="protein"/>
</dbReference>
<dbReference type="Bgee" id="ENSG00000172689">
    <property type="expression patterns" value="Expressed in duodenum and 14 other cell types or tissues"/>
</dbReference>
<dbReference type="GO" id="GO:0005886">
    <property type="term" value="C:plasma membrane"/>
    <property type="evidence" value="ECO:0000318"/>
    <property type="project" value="GO_Central"/>
</dbReference>
<dbReference type="GO" id="GO:0007166">
    <property type="term" value="P:cell surface receptor signaling pathway"/>
    <property type="evidence" value="ECO:0000318"/>
    <property type="project" value="GO_Central"/>
</dbReference>
<dbReference type="InterPro" id="IPR007237">
    <property type="entry name" value="CD20-like"/>
</dbReference>
<dbReference type="InterPro" id="IPR030417">
    <property type="entry name" value="MS4A"/>
</dbReference>
<dbReference type="PANTHER" id="PTHR23320:SF5">
    <property type="entry name" value="MEMBRANE-SPANNING 4-DOMAINS SUBFAMILY A MEMBER 10"/>
    <property type="match status" value="1"/>
</dbReference>
<dbReference type="PANTHER" id="PTHR23320">
    <property type="entry name" value="MEMBRANE-SPANNING 4-DOMAINS SUBFAMILY A MS4A -RELATED"/>
    <property type="match status" value="1"/>
</dbReference>
<dbReference type="Pfam" id="PF04103">
    <property type="entry name" value="CD20"/>
    <property type="match status" value="1"/>
</dbReference>
<sequence length="267" mass="29747">MKAEATVIPSRCARGLPSWQVLSPVQPWQTSAPQNTTQPKLLAPHQHEKSQKKSSLLKELGAFHITIALLHLVFGGYLASIVKNLHLVVLKSWYPFWGAASFLISGILAITMKTFSKTYLKMLCLMTNLISLFCVLSGLFVISKDLFLESPFESPIWRMYPNSTVHIQRLELALLCFTVLELFLPVPTAVTAWRGDCPSAKNDDACLVPNTPLHLKGLPVEPPPSYQSVIQGDAQHKQHQRLREVKQVAPDTWIVTDGAAIWTQTAN</sequence>
<reference key="1">
    <citation type="journal article" date="2004" name="Nat. Genet.">
        <title>Complete sequencing and characterization of 21,243 full-length human cDNAs.</title>
        <authorList>
            <person name="Ota T."/>
            <person name="Suzuki Y."/>
            <person name="Nishikawa T."/>
            <person name="Otsuki T."/>
            <person name="Sugiyama T."/>
            <person name="Irie R."/>
            <person name="Wakamatsu A."/>
            <person name="Hayashi K."/>
            <person name="Sato H."/>
            <person name="Nagai K."/>
            <person name="Kimura K."/>
            <person name="Makita H."/>
            <person name="Sekine M."/>
            <person name="Obayashi M."/>
            <person name="Nishi T."/>
            <person name="Shibahara T."/>
            <person name="Tanaka T."/>
            <person name="Ishii S."/>
            <person name="Yamamoto J."/>
            <person name="Saito K."/>
            <person name="Kawai Y."/>
            <person name="Isono Y."/>
            <person name="Nakamura Y."/>
            <person name="Nagahari K."/>
            <person name="Murakami K."/>
            <person name="Yasuda T."/>
            <person name="Iwayanagi T."/>
            <person name="Wagatsuma M."/>
            <person name="Shiratori A."/>
            <person name="Sudo H."/>
            <person name="Hosoiri T."/>
            <person name="Kaku Y."/>
            <person name="Kodaira H."/>
            <person name="Kondo H."/>
            <person name="Sugawara M."/>
            <person name="Takahashi M."/>
            <person name="Kanda K."/>
            <person name="Yokoi T."/>
            <person name="Furuya T."/>
            <person name="Kikkawa E."/>
            <person name="Omura Y."/>
            <person name="Abe K."/>
            <person name="Kamihara K."/>
            <person name="Katsuta N."/>
            <person name="Sato K."/>
            <person name="Tanikawa M."/>
            <person name="Yamazaki M."/>
            <person name="Ninomiya K."/>
            <person name="Ishibashi T."/>
            <person name="Yamashita H."/>
            <person name="Murakawa K."/>
            <person name="Fujimori K."/>
            <person name="Tanai H."/>
            <person name="Kimata M."/>
            <person name="Watanabe M."/>
            <person name="Hiraoka S."/>
            <person name="Chiba Y."/>
            <person name="Ishida S."/>
            <person name="Ono Y."/>
            <person name="Takiguchi S."/>
            <person name="Watanabe S."/>
            <person name="Yosida M."/>
            <person name="Hotuta T."/>
            <person name="Kusano J."/>
            <person name="Kanehori K."/>
            <person name="Takahashi-Fujii A."/>
            <person name="Hara H."/>
            <person name="Tanase T.-O."/>
            <person name="Nomura Y."/>
            <person name="Togiya S."/>
            <person name="Komai F."/>
            <person name="Hara R."/>
            <person name="Takeuchi K."/>
            <person name="Arita M."/>
            <person name="Imose N."/>
            <person name="Musashino K."/>
            <person name="Yuuki H."/>
            <person name="Oshima A."/>
            <person name="Sasaki N."/>
            <person name="Aotsuka S."/>
            <person name="Yoshikawa Y."/>
            <person name="Matsunawa H."/>
            <person name="Ichihara T."/>
            <person name="Shiohata N."/>
            <person name="Sano S."/>
            <person name="Moriya S."/>
            <person name="Momiyama H."/>
            <person name="Satoh N."/>
            <person name="Takami S."/>
            <person name="Terashima Y."/>
            <person name="Suzuki O."/>
            <person name="Nakagawa S."/>
            <person name="Senoh A."/>
            <person name="Mizoguchi H."/>
            <person name="Goto Y."/>
            <person name="Shimizu F."/>
            <person name="Wakebe H."/>
            <person name="Hishigaki H."/>
            <person name="Watanabe T."/>
            <person name="Sugiyama A."/>
            <person name="Takemoto M."/>
            <person name="Kawakami B."/>
            <person name="Yamazaki M."/>
            <person name="Watanabe K."/>
            <person name="Kumagai A."/>
            <person name="Itakura S."/>
            <person name="Fukuzumi Y."/>
            <person name="Fujimori Y."/>
            <person name="Komiyama M."/>
            <person name="Tashiro H."/>
            <person name="Tanigami A."/>
            <person name="Fujiwara T."/>
            <person name="Ono T."/>
            <person name="Yamada K."/>
            <person name="Fujii Y."/>
            <person name="Ozaki K."/>
            <person name="Hirao M."/>
            <person name="Ohmori Y."/>
            <person name="Kawabata A."/>
            <person name="Hikiji T."/>
            <person name="Kobatake N."/>
            <person name="Inagaki H."/>
            <person name="Ikema Y."/>
            <person name="Okamoto S."/>
            <person name="Okitani R."/>
            <person name="Kawakami T."/>
            <person name="Noguchi S."/>
            <person name="Itoh T."/>
            <person name="Shigeta K."/>
            <person name="Senba T."/>
            <person name="Matsumura K."/>
            <person name="Nakajima Y."/>
            <person name="Mizuno T."/>
            <person name="Morinaga M."/>
            <person name="Sasaki M."/>
            <person name="Togashi T."/>
            <person name="Oyama M."/>
            <person name="Hata H."/>
            <person name="Watanabe M."/>
            <person name="Komatsu T."/>
            <person name="Mizushima-Sugano J."/>
            <person name="Satoh T."/>
            <person name="Shirai Y."/>
            <person name="Takahashi Y."/>
            <person name="Nakagawa K."/>
            <person name="Okumura K."/>
            <person name="Nagase T."/>
            <person name="Nomura N."/>
            <person name="Kikuchi H."/>
            <person name="Masuho Y."/>
            <person name="Yamashita R."/>
            <person name="Nakai K."/>
            <person name="Yada T."/>
            <person name="Nakamura Y."/>
            <person name="Ohara O."/>
            <person name="Isogai T."/>
            <person name="Sugano S."/>
        </authorList>
    </citation>
    <scope>NUCLEOTIDE SEQUENCE [LARGE SCALE MRNA]</scope>
    <source>
        <tissue>Small intestine</tissue>
    </source>
</reference>
<reference key="2">
    <citation type="journal article" date="2006" name="Nature">
        <title>Human chromosome 11 DNA sequence and analysis including novel gene identification.</title>
        <authorList>
            <person name="Taylor T.D."/>
            <person name="Noguchi H."/>
            <person name="Totoki Y."/>
            <person name="Toyoda A."/>
            <person name="Kuroki Y."/>
            <person name="Dewar K."/>
            <person name="Lloyd C."/>
            <person name="Itoh T."/>
            <person name="Takeda T."/>
            <person name="Kim D.-W."/>
            <person name="She X."/>
            <person name="Barlow K.F."/>
            <person name="Bloom T."/>
            <person name="Bruford E."/>
            <person name="Chang J.L."/>
            <person name="Cuomo C.A."/>
            <person name="Eichler E."/>
            <person name="FitzGerald M.G."/>
            <person name="Jaffe D.B."/>
            <person name="LaButti K."/>
            <person name="Nicol R."/>
            <person name="Park H.-S."/>
            <person name="Seaman C."/>
            <person name="Sougnez C."/>
            <person name="Yang X."/>
            <person name="Zimmer A.R."/>
            <person name="Zody M.C."/>
            <person name="Birren B.W."/>
            <person name="Nusbaum C."/>
            <person name="Fujiyama A."/>
            <person name="Hattori M."/>
            <person name="Rogers J."/>
            <person name="Lander E.S."/>
            <person name="Sakaki Y."/>
        </authorList>
    </citation>
    <scope>NUCLEOTIDE SEQUENCE [LARGE SCALE GENOMIC DNA]</scope>
</reference>
<reference key="3">
    <citation type="journal article" date="2004" name="Genome Res.">
        <title>The status, quality, and expansion of the NIH full-length cDNA project: the Mammalian Gene Collection (MGC).</title>
        <authorList>
            <consortium name="The MGC Project Team"/>
        </authorList>
    </citation>
    <scope>NUCLEOTIDE SEQUENCE [LARGE SCALE MRNA]</scope>
</reference>
<reference key="4">
    <citation type="journal article" date="2001" name="Immunogenetics">
        <title>Structural organization of the human MS4A gene cluster on chromosome 11q12.</title>
        <authorList>
            <person name="Liang Y."/>
            <person name="Buckley T.R."/>
            <person name="Tu L."/>
            <person name="Langdon S.D."/>
            <person name="Tedder T.F."/>
        </authorList>
    </citation>
    <scope>NUCLEOTIDE SEQUENCE [GENOMIC DNA] OF 1-61 AND 202-241</scope>
</reference>
<accession>Q96PG2</accession>
<accession>B2RP45</accession>
<accession>Q96PG3</accession>
<name>M4A10_HUMAN</name>
<proteinExistence type="evidence at protein level"/>
<feature type="chain" id="PRO_0000158646" description="Membrane-spanning 4-domains subfamily A member 10">
    <location>
        <begin position="1"/>
        <end position="267"/>
    </location>
</feature>
<feature type="topological domain" description="Cytoplasmic" evidence="2">
    <location>
        <begin position="1"/>
        <end position="61"/>
    </location>
</feature>
<feature type="transmembrane region" description="Helical" evidence="2">
    <location>
        <begin position="62"/>
        <end position="82"/>
    </location>
</feature>
<feature type="topological domain" description="Extracellular" evidence="2">
    <location>
        <begin position="83"/>
        <end position="91"/>
    </location>
</feature>
<feature type="transmembrane region" description="Helical" evidence="2">
    <location>
        <begin position="92"/>
        <end position="112"/>
    </location>
</feature>
<feature type="topological domain" description="Cytoplasmic" evidence="2">
    <location>
        <begin position="113"/>
        <end position="121"/>
    </location>
</feature>
<feature type="transmembrane region" description="Helical" evidence="2">
    <location>
        <begin position="122"/>
        <end position="142"/>
    </location>
</feature>
<feature type="topological domain" description="Extracellular" evidence="2">
    <location>
        <begin position="143"/>
        <end position="171"/>
    </location>
</feature>
<feature type="transmembrane region" description="Helical" evidence="2">
    <location>
        <begin position="172"/>
        <end position="192"/>
    </location>
</feature>
<feature type="topological domain" description="Cytoplasmic" evidence="2">
    <location>
        <begin position="193"/>
        <end position="267"/>
    </location>
</feature>
<feature type="sequence variant" id="VAR_057652" description="In dbSNP:rs12419635.">
    <original>P</original>
    <variation>L</variation>
    <location>
        <position position="219"/>
    </location>
</feature>
<feature type="sequence conflict" description="In Ref. 1; BAC85498." evidence="3" ref="1">
    <original>E</original>
    <variation>D</variation>
    <location>
        <position position="48"/>
    </location>
</feature>
<feature type="sequence conflict" description="In Ref. 1; BAC85498." evidence="3" ref="1">
    <original>T</original>
    <variation>A</variation>
    <location>
        <position position="263"/>
    </location>
</feature>
<gene>
    <name type="primary">MS4A10</name>
    <name type="synonym">CD20L7</name>
    <name type="synonym">MS4A9</name>
</gene>